<accession>B8DBN7</accession>
<reference key="1">
    <citation type="journal article" date="2011" name="J. Bacteriol.">
        <title>Genome sequence of lineage III Listeria monocytogenes strain HCC23.</title>
        <authorList>
            <person name="Steele C.L."/>
            <person name="Donaldson J.R."/>
            <person name="Paul D."/>
            <person name="Banes M.M."/>
            <person name="Arick T."/>
            <person name="Bridges S.M."/>
            <person name="Lawrence M.L."/>
        </authorList>
    </citation>
    <scope>NUCLEOTIDE SEQUENCE [LARGE SCALE GENOMIC DNA]</scope>
    <source>
        <strain>HCC23</strain>
    </source>
</reference>
<keyword id="KW-0067">ATP-binding</keyword>
<keyword id="KW-0342">GTP-binding</keyword>
<keyword id="KW-0547">Nucleotide-binding</keyword>
<feature type="chain" id="PRO_1000147362" description="Nucleotide-binding protein LMHCC_0126">
    <location>
        <begin position="1"/>
        <end position="291"/>
    </location>
</feature>
<feature type="binding site" evidence="1">
    <location>
        <begin position="13"/>
        <end position="20"/>
    </location>
    <ligand>
        <name>ATP</name>
        <dbReference type="ChEBI" id="CHEBI:30616"/>
    </ligand>
</feature>
<feature type="binding site" evidence="1">
    <location>
        <begin position="63"/>
        <end position="66"/>
    </location>
    <ligand>
        <name>GTP</name>
        <dbReference type="ChEBI" id="CHEBI:37565"/>
    </ligand>
</feature>
<dbReference type="EMBL" id="CP001175">
    <property type="protein sequence ID" value="ACK38488.1"/>
    <property type="molecule type" value="Genomic_DNA"/>
</dbReference>
<dbReference type="SMR" id="B8DBN7"/>
<dbReference type="KEGG" id="lmh:LMHCC_0126"/>
<dbReference type="HOGENOM" id="CLU_059558_0_0_9"/>
<dbReference type="GO" id="GO:0005524">
    <property type="term" value="F:ATP binding"/>
    <property type="evidence" value="ECO:0007669"/>
    <property type="project" value="UniProtKB-UniRule"/>
</dbReference>
<dbReference type="GO" id="GO:0005525">
    <property type="term" value="F:GTP binding"/>
    <property type="evidence" value="ECO:0007669"/>
    <property type="project" value="UniProtKB-UniRule"/>
</dbReference>
<dbReference type="Gene3D" id="3.40.50.300">
    <property type="entry name" value="P-loop containing nucleotide triphosphate hydrolases"/>
    <property type="match status" value="1"/>
</dbReference>
<dbReference type="HAMAP" id="MF_00636">
    <property type="entry name" value="RapZ_like"/>
    <property type="match status" value="1"/>
</dbReference>
<dbReference type="InterPro" id="IPR027417">
    <property type="entry name" value="P-loop_NTPase"/>
</dbReference>
<dbReference type="InterPro" id="IPR005337">
    <property type="entry name" value="RapZ-like"/>
</dbReference>
<dbReference type="InterPro" id="IPR053930">
    <property type="entry name" value="RapZ-like_N"/>
</dbReference>
<dbReference type="InterPro" id="IPR053931">
    <property type="entry name" value="RapZ_C"/>
</dbReference>
<dbReference type="NCBIfam" id="NF003828">
    <property type="entry name" value="PRK05416.1"/>
    <property type="match status" value="1"/>
</dbReference>
<dbReference type="PANTHER" id="PTHR30448">
    <property type="entry name" value="RNASE ADAPTER PROTEIN RAPZ"/>
    <property type="match status" value="1"/>
</dbReference>
<dbReference type="PANTHER" id="PTHR30448:SF0">
    <property type="entry name" value="RNASE ADAPTER PROTEIN RAPZ"/>
    <property type="match status" value="1"/>
</dbReference>
<dbReference type="Pfam" id="PF22740">
    <property type="entry name" value="PapZ_C"/>
    <property type="match status" value="1"/>
</dbReference>
<dbReference type="Pfam" id="PF03668">
    <property type="entry name" value="RapZ-like_N"/>
    <property type="match status" value="1"/>
</dbReference>
<dbReference type="PIRSF" id="PIRSF005052">
    <property type="entry name" value="P-loopkin"/>
    <property type="match status" value="1"/>
</dbReference>
<dbReference type="SUPFAM" id="SSF52540">
    <property type="entry name" value="P-loop containing nucleoside triphosphate hydrolases"/>
    <property type="match status" value="1"/>
</dbReference>
<protein>
    <recommendedName>
        <fullName evidence="1">Nucleotide-binding protein LMHCC_0126</fullName>
    </recommendedName>
</protein>
<proteinExistence type="inferred from homology"/>
<comment type="function">
    <text evidence="1">Displays ATPase and GTPase activities.</text>
</comment>
<comment type="similarity">
    <text evidence="1">Belongs to the RapZ-like family.</text>
</comment>
<evidence type="ECO:0000255" key="1">
    <source>
        <dbReference type="HAMAP-Rule" id="MF_00636"/>
    </source>
</evidence>
<gene>
    <name type="ordered locus">LMHCC_0126</name>
</gene>
<sequence>MTSKQLKLVIITGMSGAGKTVAMQSLEDLGYFCVDNLPPSLLPKFWELMKESDKMDKIALVMDLRGREFFDSIEPALDELDNTNFITTKILFLEADDKVLVSRYKETRRHHPLEPNGSVLDGINAERELLSDLKGRSQLVINTSNMAPRELRERINNEFQTEDKDVFNVQLMSFGFKYGIPIDADLVFDVRFLPNPHYIDKMRPLTGLDEDVYEYVMKWPETQTFLDKLVDLLMFTLPFYKREGKTQLVIAIGCTGGQHRSVALTEFVGKAIQQKYETTISHRDMKRRKGR</sequence>
<name>Y126_LISMH</name>
<organism>
    <name type="scientific">Listeria monocytogenes serotype 4a (strain HCC23)</name>
    <dbReference type="NCBI Taxonomy" id="552536"/>
    <lineage>
        <taxon>Bacteria</taxon>
        <taxon>Bacillati</taxon>
        <taxon>Bacillota</taxon>
        <taxon>Bacilli</taxon>
        <taxon>Bacillales</taxon>
        <taxon>Listeriaceae</taxon>
        <taxon>Listeria</taxon>
    </lineage>
</organism>